<protein>
    <recommendedName>
        <fullName>Tetratricopeptide repeat protein 21 homolog</fullName>
        <shortName>TPR repeat protein 21 homolog</shortName>
    </recommendedName>
</protein>
<proteinExistence type="inferred from homology"/>
<evidence type="ECO:0000305" key="1"/>
<evidence type="ECO:0000312" key="2">
    <source>
        <dbReference type="WormBase" id="CBG09016"/>
    </source>
</evidence>
<comment type="similarity">
    <text evidence="1">Belongs to the TTC21 family.</text>
</comment>
<name>TTC21_CAEBR</name>
<keyword id="KW-1185">Reference proteome</keyword>
<keyword id="KW-0677">Repeat</keyword>
<keyword id="KW-0802">TPR repeat</keyword>
<reference key="1">
    <citation type="journal article" date="2003" name="PLoS Biol.">
        <title>The genome sequence of Caenorhabditis briggsae: a platform for comparative genomics.</title>
        <authorList>
            <person name="Stein L.D."/>
            <person name="Bao Z."/>
            <person name="Blasiar D."/>
            <person name="Blumenthal T."/>
            <person name="Brent M.R."/>
            <person name="Chen N."/>
            <person name="Chinwalla A."/>
            <person name="Clarke L."/>
            <person name="Clee C."/>
            <person name="Coghlan A."/>
            <person name="Coulson A."/>
            <person name="D'Eustachio P."/>
            <person name="Fitch D.H.A."/>
            <person name="Fulton L.A."/>
            <person name="Fulton R.E."/>
            <person name="Griffiths-Jones S."/>
            <person name="Harris T.W."/>
            <person name="Hillier L.W."/>
            <person name="Kamath R."/>
            <person name="Kuwabara P.E."/>
            <person name="Mardis E.R."/>
            <person name="Marra M.A."/>
            <person name="Miner T.L."/>
            <person name="Minx P."/>
            <person name="Mullikin J.C."/>
            <person name="Plumb R.W."/>
            <person name="Rogers J."/>
            <person name="Schein J.E."/>
            <person name="Sohrmann M."/>
            <person name="Spieth J."/>
            <person name="Stajich J.E."/>
            <person name="Wei C."/>
            <person name="Willey D."/>
            <person name="Wilson R.K."/>
            <person name="Durbin R.M."/>
            <person name="Waterston R.H."/>
        </authorList>
    </citation>
    <scope>NUCLEOTIDE SEQUENCE [LARGE SCALE GENOMIC DNA]</scope>
    <source>
        <strain>AF16</strain>
    </source>
</reference>
<sequence>MDPDIENERIEDRKKWGHKDVEHWRAVSNVHYYTREGFYGTAILVCDGRLATVQDVPLAILKGVCLVLLGKIPEAIRHLEAFSNDQNFSLGALYALKWAHASAFNPDSKSIVEIEAEISKTARNEKTPYTSYASAAEVLYFAGEFQKAKQNLDIAGKRSTEKHAKYYCLMGWIDLGLGKKQKSTQELFEKAGGQEYPDGNIGRCKILEGHHSASEMRVAANELAISTIHFLPGHIEKAKALIMLRDWHGVMDCIVNADQQEGSNPYIEILRTTHGICFAGEVSQLNRTLQLLLKSLDDNESINHALYAKITKLIVSISGKNEKILRHARDFLIRALKLSRKPDYVALSLRIAFGLGDAREVSVLSQELIALDCEDPYAILSSVTSMLMVSRVSDARAQFDIMPAAHPKLLESPFYYLIASVLAKHSKDKSFENFRQHIENLIEMLRNQLQSFPFGIDYLLLFSSDLLYFAIEQCFDFYPLVPMKAPDDTMKLTSKMLQMIYDVAPGLAYCALQLARNCYLVSNTNAAEKWIYKALEKDDSLADAHILRAQLILDRGGKIQDADDALVTGLNFNFKLRETSLYHLIKSKTFKKRNENDEALKTLKMALQIPKKEMSNNLFVPKESADTHKISVQLELIDTLRQTKRIQDAEDTMADAMAEWAGQPEQHQLVIAQAQLYLTKGHTEKALAILRKIQPGQSNFHLSRIRMAEIYLEEKKDKRMFAACYRELLKVEPTPGSYSLLGDAFMKVQEPEDAINFYEQALKMQSKDVQLAEKIGEAYVMAHLYSKAVNFYESSMNIYKDKNMRLKLANLLLRLKNYEKCEKILRAPLDREPEPSDTETIQTHIQFLLLLAECHEMVENIPEAMKDFEKAKSLHNKIQDKTNTTGLRKEGARICNLQAELYYRRHEFPPAIEVCKQALQFYETDLKSNLLLSRIYKDENKWTLVLQPCQAVLQVDPHNDEANLILADFYYIKSEADHAMTSYITLLNKNPLHWHALFRVVELYCRKGEHHKADEFLNSARDANPRCVTEAGYSVCRGRFEWYTGDQSQALRCYSRAKDSPNVVWREKALYAIIDICLNPENEKILDADSVENAEQKTTEEAADQQSTAQVYLDLLGKVGPTERYRLAQNFVRMHTTDKNTIMATIDEFNKMAYAADKSIISVAAIYGIAKGYWLLKKQQPAKQLLKSLHGRVWNFDDAEYLEKCWLLMAEIYVGASKWEQAGTYLDQVLKYNCNSLRAFELYGQAKEKEQKYVEASKIYEKAFNTTNQKSCSFGYKLAFTLLKTRRLFLCIETCQKVLDINPQYPKIQREIMDKARGMIRTT</sequence>
<accession>Q61LA1</accession>
<accession>A8X805</accession>
<feature type="chain" id="PRO_0000291920" description="Tetratricopeptide repeat protein 21 homolog">
    <location>
        <begin position="1"/>
        <end position="1323"/>
    </location>
</feature>
<feature type="repeat" description="TPR 1">
    <location>
        <begin position="56"/>
        <end position="89"/>
    </location>
</feature>
<feature type="repeat" description="TPR 2">
    <location>
        <begin position="411"/>
        <end position="444"/>
    </location>
</feature>
<feature type="repeat" description="TPR 3">
    <location>
        <begin position="580"/>
        <end position="613"/>
    </location>
</feature>
<feature type="repeat" description="TPR 4">
    <location>
        <begin position="667"/>
        <end position="700"/>
    </location>
</feature>
<feature type="repeat" description="TPR 5">
    <location>
        <begin position="702"/>
        <end position="735"/>
    </location>
</feature>
<feature type="repeat" description="TPR 6">
    <location>
        <begin position="736"/>
        <end position="768"/>
    </location>
</feature>
<feature type="repeat" description="TPR 7">
    <location>
        <begin position="770"/>
        <end position="802"/>
    </location>
</feature>
<feature type="repeat" description="TPR 8">
    <location>
        <begin position="804"/>
        <end position="835"/>
    </location>
</feature>
<feature type="repeat" description="TPR 9">
    <location>
        <begin position="845"/>
        <end position="878"/>
    </location>
</feature>
<feature type="repeat" description="TPR 10">
    <location>
        <begin position="892"/>
        <end position="925"/>
    </location>
</feature>
<feature type="repeat" description="TPR 11">
    <location>
        <begin position="927"/>
        <end position="959"/>
    </location>
</feature>
<feature type="repeat" description="TPR 12">
    <location>
        <begin position="961"/>
        <end position="993"/>
    </location>
</feature>
<feature type="repeat" description="TPR 13">
    <location>
        <begin position="995"/>
        <end position="1027"/>
    </location>
</feature>
<feature type="repeat" description="TPR 14">
    <location>
        <begin position="1031"/>
        <end position="1064"/>
    </location>
</feature>
<feature type="repeat" description="TPR 15">
    <location>
        <begin position="1203"/>
        <end position="1236"/>
    </location>
</feature>
<feature type="repeat" description="TPR 16">
    <location>
        <begin position="1238"/>
        <end position="1270"/>
    </location>
</feature>
<feature type="repeat" description="TPR 17">
    <location>
        <begin position="1272"/>
        <end position="1305"/>
    </location>
</feature>
<gene>
    <name evidence="2" type="primary">ift-139</name>
    <name evidence="2" type="ORF">CBG09016</name>
</gene>
<dbReference type="EMBL" id="HE601284">
    <property type="protein sequence ID" value="CAP28766.1"/>
    <property type="molecule type" value="Genomic_DNA"/>
</dbReference>
<dbReference type="RefSeq" id="XP_002641159.1">
    <property type="nucleotide sequence ID" value="XM_002641113.1"/>
</dbReference>
<dbReference type="SMR" id="Q61LA1"/>
<dbReference type="FunCoup" id="Q61LA1">
    <property type="interactions" value="980"/>
</dbReference>
<dbReference type="STRING" id="6238.Q61LA1"/>
<dbReference type="EnsemblMetazoa" id="CBG09016.1">
    <property type="protein sequence ID" value="CBG09016.1"/>
    <property type="gene ID" value="WBGene00030687"/>
</dbReference>
<dbReference type="GeneID" id="8583152"/>
<dbReference type="KEGG" id="cbr:CBG_09016"/>
<dbReference type="CTD" id="8583152"/>
<dbReference type="WormBase" id="CBG09016">
    <property type="protein sequence ID" value="CBP08157"/>
    <property type="gene ID" value="WBGene00030687"/>
    <property type="gene designation" value="Cbr-ift-139"/>
</dbReference>
<dbReference type="eggNOG" id="ENOG502QQAB">
    <property type="taxonomic scope" value="Eukaryota"/>
</dbReference>
<dbReference type="HOGENOM" id="CLU_006149_0_0_1"/>
<dbReference type="InParanoid" id="Q61LA1"/>
<dbReference type="OMA" id="NATCVRA"/>
<dbReference type="Proteomes" id="UP000008549">
    <property type="component" value="Unassembled WGS sequence"/>
</dbReference>
<dbReference type="GO" id="GO:0005929">
    <property type="term" value="C:cilium"/>
    <property type="evidence" value="ECO:0007669"/>
    <property type="project" value="GOC"/>
</dbReference>
<dbReference type="GO" id="GO:0030991">
    <property type="term" value="C:intraciliary transport particle A"/>
    <property type="evidence" value="ECO:0000318"/>
    <property type="project" value="GO_Central"/>
</dbReference>
<dbReference type="GO" id="GO:0035721">
    <property type="term" value="P:intraciliary retrograde transport"/>
    <property type="evidence" value="ECO:0000318"/>
    <property type="project" value="GO_Central"/>
</dbReference>
<dbReference type="GO" id="GO:0061512">
    <property type="term" value="P:protein localization to cilium"/>
    <property type="evidence" value="ECO:0000318"/>
    <property type="project" value="GO_Central"/>
</dbReference>
<dbReference type="FunFam" id="1.25.40.10:FF:003691">
    <property type="entry name" value="Tetratricopeptide repeat protein 21 homolog"/>
    <property type="match status" value="1"/>
</dbReference>
<dbReference type="FunFam" id="1.25.40.10:FF:003694">
    <property type="entry name" value="Tetratricopeptide repeat protein 21 homolog"/>
    <property type="match status" value="1"/>
</dbReference>
<dbReference type="FunFam" id="1.25.40.10:FF:003748">
    <property type="entry name" value="Tetratricopeptide repeat protein 21 homolog"/>
    <property type="match status" value="1"/>
</dbReference>
<dbReference type="Gene3D" id="1.25.40.10">
    <property type="entry name" value="Tetratricopeptide repeat domain"/>
    <property type="match status" value="3"/>
</dbReference>
<dbReference type="InterPro" id="IPR056832">
    <property type="entry name" value="ARM_TT21_2nd"/>
</dbReference>
<dbReference type="InterPro" id="IPR056836">
    <property type="entry name" value="ARM_TT21_4th"/>
</dbReference>
<dbReference type="InterPro" id="IPR056835">
    <property type="entry name" value="ARM_TT21_5th"/>
</dbReference>
<dbReference type="InterPro" id="IPR056834">
    <property type="entry name" value="ARM_TT21_C"/>
</dbReference>
<dbReference type="InterPro" id="IPR056833">
    <property type="entry name" value="ARM_TT21_N"/>
</dbReference>
<dbReference type="InterPro" id="IPR011990">
    <property type="entry name" value="TPR-like_helical_dom_sf"/>
</dbReference>
<dbReference type="InterPro" id="IPR019734">
    <property type="entry name" value="TPR_rpt"/>
</dbReference>
<dbReference type="InterPro" id="IPR040364">
    <property type="entry name" value="TTC21A/TTC21B"/>
</dbReference>
<dbReference type="PANTHER" id="PTHR14699">
    <property type="entry name" value="STI2 PROTEIN-RELATED"/>
    <property type="match status" value="1"/>
</dbReference>
<dbReference type="PANTHER" id="PTHR14699:SF0">
    <property type="entry name" value="TETRATRICOPEPTIDE REPEAT PROTEIN 21 HOMOLOG"/>
    <property type="match status" value="1"/>
</dbReference>
<dbReference type="Pfam" id="PF25058">
    <property type="entry name" value="ARM_TT21"/>
    <property type="match status" value="1"/>
</dbReference>
<dbReference type="Pfam" id="PF25060">
    <property type="entry name" value="ARM_TT21_2nd"/>
    <property type="match status" value="1"/>
</dbReference>
<dbReference type="Pfam" id="PF25068">
    <property type="entry name" value="ARM_TT21_4th"/>
    <property type="match status" value="1"/>
</dbReference>
<dbReference type="Pfam" id="PF25064">
    <property type="entry name" value="ARM_TT21_5th"/>
    <property type="match status" value="1"/>
</dbReference>
<dbReference type="Pfam" id="PF25063">
    <property type="entry name" value="ARM_TT21_C"/>
    <property type="match status" value="1"/>
</dbReference>
<dbReference type="Pfam" id="PF25062">
    <property type="entry name" value="ARM_TT21_N"/>
    <property type="match status" value="1"/>
</dbReference>
<dbReference type="Pfam" id="PF13176">
    <property type="entry name" value="TPR_7"/>
    <property type="match status" value="1"/>
</dbReference>
<dbReference type="SMART" id="SM00028">
    <property type="entry name" value="TPR"/>
    <property type="match status" value="11"/>
</dbReference>
<dbReference type="SUPFAM" id="SSF48452">
    <property type="entry name" value="TPR-like"/>
    <property type="match status" value="4"/>
</dbReference>
<dbReference type="PROSITE" id="PS50005">
    <property type="entry name" value="TPR"/>
    <property type="match status" value="10"/>
</dbReference>
<dbReference type="PROSITE" id="PS50293">
    <property type="entry name" value="TPR_REGION"/>
    <property type="match status" value="2"/>
</dbReference>
<organism>
    <name type="scientific">Caenorhabditis briggsae</name>
    <dbReference type="NCBI Taxonomy" id="6238"/>
    <lineage>
        <taxon>Eukaryota</taxon>
        <taxon>Metazoa</taxon>
        <taxon>Ecdysozoa</taxon>
        <taxon>Nematoda</taxon>
        <taxon>Chromadorea</taxon>
        <taxon>Rhabditida</taxon>
        <taxon>Rhabditina</taxon>
        <taxon>Rhabditomorpha</taxon>
        <taxon>Rhabditoidea</taxon>
        <taxon>Rhabditidae</taxon>
        <taxon>Peloderinae</taxon>
        <taxon>Caenorhabditis</taxon>
    </lineage>
</organism>